<proteinExistence type="evidence at protein level"/>
<feature type="chain" id="PRO_0000432654" description="Increased DNA methylation 3">
    <location>
        <begin position="1"/>
        <end position="463"/>
    </location>
</feature>
<feature type="region of interest" description="Disordered" evidence="1">
    <location>
        <begin position="169"/>
        <end position="199"/>
    </location>
</feature>
<feature type="region of interest" description="Disordered" evidence="1">
    <location>
        <begin position="300"/>
        <end position="347"/>
    </location>
</feature>
<feature type="compositionally biased region" description="Basic and acidic residues" evidence="1">
    <location>
        <begin position="169"/>
        <end position="182"/>
    </location>
</feature>
<feature type="compositionally biased region" description="Polar residues" evidence="1">
    <location>
        <begin position="184"/>
        <end position="199"/>
    </location>
</feature>
<feature type="compositionally biased region" description="Basic residues" evidence="1">
    <location>
        <begin position="300"/>
        <end position="310"/>
    </location>
</feature>
<accession>Q9SYQ0</accession>
<gene>
    <name evidence="5" type="primary">IDM3</name>
    <name evidence="4" type="synonym">Acd51.9</name>
    <name evidence="6" type="ordered locus">At1g20870</name>
    <name evidence="7" type="ORF">F9H16.15</name>
</gene>
<reference key="1">
    <citation type="journal article" date="2000" name="Nature">
        <title>Sequence and analysis of chromosome 1 of the plant Arabidopsis thaliana.</title>
        <authorList>
            <person name="Theologis A."/>
            <person name="Ecker J.R."/>
            <person name="Palm C.J."/>
            <person name="Federspiel N.A."/>
            <person name="Kaul S."/>
            <person name="White O."/>
            <person name="Alonso J."/>
            <person name="Altafi H."/>
            <person name="Araujo R."/>
            <person name="Bowman C.L."/>
            <person name="Brooks S.Y."/>
            <person name="Buehler E."/>
            <person name="Chan A."/>
            <person name="Chao Q."/>
            <person name="Chen H."/>
            <person name="Cheuk R.F."/>
            <person name="Chin C.W."/>
            <person name="Chung M.K."/>
            <person name="Conn L."/>
            <person name="Conway A.B."/>
            <person name="Conway A.R."/>
            <person name="Creasy T.H."/>
            <person name="Dewar K."/>
            <person name="Dunn P."/>
            <person name="Etgu P."/>
            <person name="Feldblyum T.V."/>
            <person name="Feng J.-D."/>
            <person name="Fong B."/>
            <person name="Fujii C.Y."/>
            <person name="Gill J.E."/>
            <person name="Goldsmith A.D."/>
            <person name="Haas B."/>
            <person name="Hansen N.F."/>
            <person name="Hughes B."/>
            <person name="Huizar L."/>
            <person name="Hunter J.L."/>
            <person name="Jenkins J."/>
            <person name="Johnson-Hopson C."/>
            <person name="Khan S."/>
            <person name="Khaykin E."/>
            <person name="Kim C.J."/>
            <person name="Koo H.L."/>
            <person name="Kremenetskaia I."/>
            <person name="Kurtz D.B."/>
            <person name="Kwan A."/>
            <person name="Lam B."/>
            <person name="Langin-Hooper S."/>
            <person name="Lee A."/>
            <person name="Lee J.M."/>
            <person name="Lenz C.A."/>
            <person name="Li J.H."/>
            <person name="Li Y.-P."/>
            <person name="Lin X."/>
            <person name="Liu S.X."/>
            <person name="Liu Z.A."/>
            <person name="Luros J.S."/>
            <person name="Maiti R."/>
            <person name="Marziali A."/>
            <person name="Militscher J."/>
            <person name="Miranda M."/>
            <person name="Nguyen M."/>
            <person name="Nierman W.C."/>
            <person name="Osborne B.I."/>
            <person name="Pai G."/>
            <person name="Peterson J."/>
            <person name="Pham P.K."/>
            <person name="Rizzo M."/>
            <person name="Rooney T."/>
            <person name="Rowley D."/>
            <person name="Sakano H."/>
            <person name="Salzberg S.L."/>
            <person name="Schwartz J.R."/>
            <person name="Shinn P."/>
            <person name="Southwick A.M."/>
            <person name="Sun H."/>
            <person name="Tallon L.J."/>
            <person name="Tambunga G."/>
            <person name="Toriumi M.J."/>
            <person name="Town C.D."/>
            <person name="Utterback T."/>
            <person name="Van Aken S."/>
            <person name="Vaysberg M."/>
            <person name="Vysotskaia V.S."/>
            <person name="Walker M."/>
            <person name="Wu D."/>
            <person name="Yu G."/>
            <person name="Fraser C.M."/>
            <person name="Venter J.C."/>
            <person name="Davis R.W."/>
        </authorList>
    </citation>
    <scope>NUCLEOTIDE SEQUENCE [LARGE SCALE GENOMIC DNA]</scope>
    <source>
        <strain>cv. Columbia</strain>
    </source>
</reference>
<reference key="2">
    <citation type="journal article" date="2017" name="Plant J.">
        <title>Araport11: a complete reannotation of the Arabidopsis thaliana reference genome.</title>
        <authorList>
            <person name="Cheng C.Y."/>
            <person name="Krishnakumar V."/>
            <person name="Chan A.P."/>
            <person name="Thibaud-Nissen F."/>
            <person name="Schobel S."/>
            <person name="Town C.D."/>
        </authorList>
    </citation>
    <scope>GENOME REANNOTATION</scope>
    <source>
        <strain>cv. Columbia</strain>
    </source>
</reference>
<reference key="3">
    <citation type="journal article" date="2006" name="Plant Physiol.">
        <title>Identification and characterization of a stress-inducible and a constitutive small heat-shock protein targeted to the matrix of plant peroxisomes.</title>
        <authorList>
            <person name="Ma C."/>
            <person name="Haslbeck M."/>
            <person name="Babujee L."/>
            <person name="Jahn O."/>
            <person name="Reumann S."/>
        </authorList>
    </citation>
    <scope>NOMENCLATURE</scope>
</reference>
<reference key="4">
    <citation type="journal article" date="2014" name="Mol. Cell">
        <title>Regulation of active DNA demethylation by an alpha-crystallin domain protein in Arabidopsis.</title>
        <authorList>
            <person name="Qian W."/>
            <person name="Miki D."/>
            <person name="Lei M."/>
            <person name="Zhu X."/>
            <person name="Zhang H."/>
            <person name="Liu Y."/>
            <person name="Li Y."/>
            <person name="Lang Z."/>
            <person name="Wang J."/>
            <person name="Tang K."/>
            <person name="Liu R."/>
            <person name="Zhu J.K."/>
        </authorList>
    </citation>
    <scope>INDUCTION BY HEAT</scope>
</reference>
<reference key="5">
    <citation type="journal article" date="2015" name="Mol. Cell">
        <title>The methyl-CpG-binding protein MBD7 facilitates active DNA demethylation to limit DNA hyper-methylation and transcriptional gene silencing.</title>
        <authorList>
            <person name="Lang Z."/>
            <person name="Lei M."/>
            <person name="Wang X."/>
            <person name="Tang K."/>
            <person name="Miki D."/>
            <person name="Zhang H."/>
            <person name="Mangrauthia S.K."/>
            <person name="Liu W."/>
            <person name="Nie W."/>
            <person name="Ma G."/>
            <person name="Yan J."/>
            <person name="Duan C.G."/>
            <person name="Hsu C.C."/>
            <person name="Wang C."/>
            <person name="Tao W.A."/>
            <person name="Gong Z."/>
            <person name="Zhu J.K."/>
        </authorList>
    </citation>
    <scope>FUNCTION</scope>
    <scope>INDUCTION BY HEAT</scope>
    <scope>SUBCELLULAR LOCATION</scope>
    <scope>INTERACTION WITH MBD7; IDM1 AND IDM2</scope>
</reference>
<keyword id="KW-0539">Nucleus</keyword>
<keyword id="KW-1185">Reference proteome</keyword>
<keyword id="KW-0804">Transcription</keyword>
<keyword id="KW-0805">Transcription regulation</keyword>
<organism evidence="8">
    <name type="scientific">Arabidopsis thaliana</name>
    <name type="common">Mouse-ear cress</name>
    <dbReference type="NCBI Taxonomy" id="3702"/>
    <lineage>
        <taxon>Eukaryota</taxon>
        <taxon>Viridiplantae</taxon>
        <taxon>Streptophyta</taxon>
        <taxon>Embryophyta</taxon>
        <taxon>Tracheophyta</taxon>
        <taxon>Spermatophyta</taxon>
        <taxon>Magnoliopsida</taxon>
        <taxon>eudicotyledons</taxon>
        <taxon>Gunneridae</taxon>
        <taxon>Pentapetalae</taxon>
        <taxon>rosids</taxon>
        <taxon>malvids</taxon>
        <taxon>Brassicales</taxon>
        <taxon>Brassicaceae</taxon>
        <taxon>Camelineae</taxon>
        <taxon>Arabidopsis</taxon>
    </lineage>
</organism>
<name>IDM3_ARATH</name>
<protein>
    <recommendedName>
        <fullName evidence="5">Increased DNA methylation 3</fullName>
    </recommendedName>
    <alternativeName>
        <fullName evidence="4">Alpha-crystallin domain-containing protein 51.9</fullName>
        <shortName evidence="4">AtAcd51.9</shortName>
    </alternativeName>
</protein>
<evidence type="ECO:0000256" key="1">
    <source>
        <dbReference type="SAM" id="MobiDB-lite"/>
    </source>
</evidence>
<evidence type="ECO:0000269" key="2">
    <source>
    </source>
</evidence>
<evidence type="ECO:0000269" key="3">
    <source>
    </source>
</evidence>
<evidence type="ECO:0000303" key="4">
    <source>
    </source>
</evidence>
<evidence type="ECO:0000303" key="5">
    <source>
    </source>
</evidence>
<evidence type="ECO:0000312" key="6">
    <source>
        <dbReference type="Araport" id="AT1G20870"/>
    </source>
</evidence>
<evidence type="ECO:0000312" key="7">
    <source>
        <dbReference type="EMBL" id="AAD30605.1"/>
    </source>
</evidence>
<evidence type="ECO:0000312" key="8">
    <source>
        <dbReference type="Proteomes" id="UP000006548"/>
    </source>
</evidence>
<comment type="function">
    <text evidence="3">Acts as an anti-silencing factor that prevents DNA hypermethylation and gene repression (PubMed:25684209).</text>
</comment>
<comment type="subunit">
    <text evidence="3">Interacts with MBD7 (via C-terminus), IDM1 and IDM2 (PubMed:25684209). Part of a complex made of MBD7, IDM1, IDM2 and IDM3 (PubMed:25684209).</text>
</comment>
<comment type="subcellular location">
    <subcellularLocation>
        <location evidence="3">Nucleus</location>
    </subcellularLocation>
</comment>
<comment type="induction">
    <text evidence="2 3">Not regulated by heat.</text>
</comment>
<dbReference type="EMBL" id="AC007369">
    <property type="protein sequence ID" value="AAD30605.1"/>
    <property type="molecule type" value="Genomic_DNA"/>
</dbReference>
<dbReference type="EMBL" id="CP002684">
    <property type="protein sequence ID" value="AEE30033.1"/>
    <property type="molecule type" value="Genomic_DNA"/>
</dbReference>
<dbReference type="EMBL" id="CP002684">
    <property type="protein sequence ID" value="ANM59103.1"/>
    <property type="molecule type" value="Genomic_DNA"/>
</dbReference>
<dbReference type="PIR" id="C86341">
    <property type="entry name" value="C86341"/>
</dbReference>
<dbReference type="RefSeq" id="NP_001319056.1">
    <property type="nucleotide sequence ID" value="NM_001332473.1"/>
</dbReference>
<dbReference type="RefSeq" id="NP_173511.1">
    <property type="nucleotide sequence ID" value="NM_101940.2"/>
</dbReference>
<dbReference type="SMR" id="Q9SYQ0"/>
<dbReference type="FunCoup" id="Q9SYQ0">
    <property type="interactions" value="1"/>
</dbReference>
<dbReference type="STRING" id="3702.Q9SYQ0"/>
<dbReference type="PaxDb" id="3702-AT1G20870.1"/>
<dbReference type="ProteomicsDB" id="250670"/>
<dbReference type="EnsemblPlants" id="AT1G20870.1">
    <property type="protein sequence ID" value="AT1G20870.1"/>
    <property type="gene ID" value="AT1G20870"/>
</dbReference>
<dbReference type="EnsemblPlants" id="AT1G20870.2">
    <property type="protein sequence ID" value="AT1G20870.2"/>
    <property type="gene ID" value="AT1G20870"/>
</dbReference>
<dbReference type="GeneID" id="838680"/>
<dbReference type="Gramene" id="AT1G20870.1">
    <property type="protein sequence ID" value="AT1G20870.1"/>
    <property type="gene ID" value="AT1G20870"/>
</dbReference>
<dbReference type="Gramene" id="AT1G20870.2">
    <property type="protein sequence ID" value="AT1G20870.2"/>
    <property type="gene ID" value="AT1G20870"/>
</dbReference>
<dbReference type="KEGG" id="ath:AT1G20870"/>
<dbReference type="Araport" id="AT1G20870"/>
<dbReference type="TAIR" id="AT1G20870">
    <property type="gene designation" value="IDM3"/>
</dbReference>
<dbReference type="eggNOG" id="ENOG502QRHQ">
    <property type="taxonomic scope" value="Eukaryota"/>
</dbReference>
<dbReference type="HOGENOM" id="CLU_043084_0_0_1"/>
<dbReference type="InParanoid" id="Q9SYQ0"/>
<dbReference type="OMA" id="DLHEQIW"/>
<dbReference type="PhylomeDB" id="Q9SYQ0"/>
<dbReference type="PRO" id="PR:Q9SYQ0"/>
<dbReference type="Proteomes" id="UP000006548">
    <property type="component" value="Chromosome 1"/>
</dbReference>
<dbReference type="ExpressionAtlas" id="Q9SYQ0">
    <property type="expression patterns" value="baseline and differential"/>
</dbReference>
<dbReference type="GO" id="GO:0005634">
    <property type="term" value="C:nucleus"/>
    <property type="evidence" value="ECO:0007669"/>
    <property type="project" value="UniProtKB-SubCell"/>
</dbReference>
<dbReference type="CDD" id="cd06464">
    <property type="entry name" value="ACD_sHsps-like"/>
    <property type="match status" value="1"/>
</dbReference>
<dbReference type="FunFam" id="2.60.40.790:FF:000049">
    <property type="entry name" value="Increased DNA methylation 3"/>
    <property type="match status" value="1"/>
</dbReference>
<dbReference type="Gene3D" id="2.60.40.790">
    <property type="match status" value="1"/>
</dbReference>
<dbReference type="InterPro" id="IPR008978">
    <property type="entry name" value="HSP20-like_chaperone"/>
</dbReference>
<dbReference type="InterPro" id="IPR039321">
    <property type="entry name" value="IDM2/3-like"/>
</dbReference>
<dbReference type="PANTHER" id="PTHR34661">
    <property type="entry name" value="INCREASED DNA METHYLATION 3"/>
    <property type="match status" value="1"/>
</dbReference>
<dbReference type="PANTHER" id="PTHR34661:SF1">
    <property type="entry name" value="INCREASED DNA METHYLATION 3"/>
    <property type="match status" value="1"/>
</dbReference>
<sequence>MSLYSDGLSSDQYFLVNFIMSNYLGPDVYSDNPRCSSSQRLARGLPPYTLMHIGSSSLTVSQLQNLYYNVLRNAKSSLLLHPDMIYMYLKGYLPLEPSGKFPQFTHFFPTNLHPQKRYSPSHEIVKGIVVIDDPAVGFINKEELQRFRCLSRLDDLKIDRVTSLSPRVNLDESRETEQDCSRNGDATANGVVTNEDYNSSGELQETCKRKEGEDAVASCVISEPERLSGDIPESQGMKQDCSRNGESAFSGIVSDQDYYSFVKLPETCKRKNKEEEAVTGHAVSGTSKTPERFRETYKRRRFKNSSKKATNKNGETLMEREKTDKPIPFSSEMKESDAEPSVVTTGTASKETLGSSVGVVDIGVNKVAYFFQVALPGVRKDYGEFSCEIESDGKVILEGSTTRGEKNIKRHSRVFEMNIRKLCPPGPFKLCFNLPGPVDPRLFSPNFRSDGIFEGVIIRHKNS</sequence>